<proteinExistence type="evidence at transcript level"/>
<keyword id="KW-0007">Acetylation</keyword>
<keyword id="KW-0067">ATP-binding</keyword>
<keyword id="KW-0342">GTP-binding</keyword>
<keyword id="KW-0418">Kinase</keyword>
<keyword id="KW-0496">Mitochondrion</keyword>
<keyword id="KW-0547">Nucleotide-binding</keyword>
<keyword id="KW-1185">Reference proteome</keyword>
<keyword id="KW-0808">Transferase</keyword>
<sequence>MASKLLRAVILGPPGSGKGTVCERIAQNFGLQHLSSGHLLRENLKTNTEVGDVAKQYLEKGLLVPDHVITRLMMSELETRSAQHWLLDGFPRTLVQAEALDRICDVDLVISLNIPFETLKDRLSRRWIHPSSGRVYNLDFNPPQVLGVDDITGEPLVQQEDDKPEALAARLRRYKDAAKPVIELYKSRGVLHQFSGTETNRIWPYVYTLFSNKITPIQSKEAY</sequence>
<comment type="function">
    <text evidence="1">Broad-specificity mitochondrial nucleoside phosphate kinase involved in cellular nucleotide homeostasis by catalyzing nucleoside-phosphate interconversions. Similar to other adenylate kinases, preferentially catalyzes the phosphorylation of the nucleoside monophosphate AMP with ATP as phosphate donor to produce ADP. Phosphorylates only AMP when using GTP as phosphate donor. In vitro, can also catalyze the phosphorylation of CMP, dAMP and dCMP and use GTP as an alternate phosphate donor. Moreover, exhibits a diphosphate kinase activity, producing ATP, CTP, GTP, UTP, TTP, dATP, dCTP and dGTP from the corresponding diphosphate substrates with either ATP or GTP as phosphate donors. Plays a role in controlling cellular ATP levels by regulating phosphorylation and activation of the energy sensor protein kinase AMPK. Plays a protective role in the cellular response to oxidative stress.</text>
</comment>
<comment type="catalytic activity">
    <reaction evidence="1">
        <text>a ribonucleoside 5'-phosphate + ATP = a ribonucleoside 5'-diphosphate + ADP</text>
        <dbReference type="Rhea" id="RHEA:24036"/>
        <dbReference type="ChEBI" id="CHEBI:30616"/>
        <dbReference type="ChEBI" id="CHEBI:57930"/>
        <dbReference type="ChEBI" id="CHEBI:58043"/>
        <dbReference type="ChEBI" id="CHEBI:456216"/>
        <dbReference type="EC" id="2.7.4.4"/>
    </reaction>
</comment>
<comment type="catalytic activity">
    <reaction evidence="1">
        <text>AMP + ATP = 2 ADP</text>
        <dbReference type="Rhea" id="RHEA:12973"/>
        <dbReference type="ChEBI" id="CHEBI:30616"/>
        <dbReference type="ChEBI" id="CHEBI:456215"/>
        <dbReference type="ChEBI" id="CHEBI:456216"/>
    </reaction>
</comment>
<comment type="catalytic activity">
    <reaction evidence="1">
        <text>GTP + AMP = GDP + ADP</text>
        <dbReference type="Rhea" id="RHEA:29863"/>
        <dbReference type="ChEBI" id="CHEBI:37565"/>
        <dbReference type="ChEBI" id="CHEBI:58189"/>
        <dbReference type="ChEBI" id="CHEBI:456215"/>
        <dbReference type="ChEBI" id="CHEBI:456216"/>
    </reaction>
</comment>
<comment type="catalytic activity">
    <reaction evidence="1">
        <text>CMP + ATP = CDP + ADP</text>
        <dbReference type="Rhea" id="RHEA:11600"/>
        <dbReference type="ChEBI" id="CHEBI:30616"/>
        <dbReference type="ChEBI" id="CHEBI:58069"/>
        <dbReference type="ChEBI" id="CHEBI:60377"/>
        <dbReference type="ChEBI" id="CHEBI:456216"/>
    </reaction>
</comment>
<comment type="catalytic activity">
    <reaction evidence="1">
        <text>GTP + CMP = CDP + GDP</text>
        <dbReference type="Rhea" id="RHEA:79855"/>
        <dbReference type="ChEBI" id="CHEBI:37565"/>
        <dbReference type="ChEBI" id="CHEBI:58069"/>
        <dbReference type="ChEBI" id="CHEBI:58189"/>
        <dbReference type="ChEBI" id="CHEBI:60377"/>
    </reaction>
</comment>
<comment type="catalytic activity">
    <reaction evidence="1">
        <text>dAMP + ATP = dADP + ADP</text>
        <dbReference type="Rhea" id="RHEA:23100"/>
        <dbReference type="ChEBI" id="CHEBI:30616"/>
        <dbReference type="ChEBI" id="CHEBI:57667"/>
        <dbReference type="ChEBI" id="CHEBI:58245"/>
        <dbReference type="ChEBI" id="CHEBI:456216"/>
    </reaction>
</comment>
<comment type="catalytic activity">
    <reaction evidence="1">
        <text>dCMP + ATP = dCDP + ADP</text>
        <dbReference type="Rhea" id="RHEA:25094"/>
        <dbReference type="ChEBI" id="CHEBI:30616"/>
        <dbReference type="ChEBI" id="CHEBI:57566"/>
        <dbReference type="ChEBI" id="CHEBI:58593"/>
        <dbReference type="ChEBI" id="CHEBI:456216"/>
    </reaction>
</comment>
<comment type="catalytic activity">
    <reaction evidence="1">
        <text>a 2'-deoxyribonucleoside 5'-diphosphate + ATP = a 2'-deoxyribonucleoside 5'-triphosphate + ADP</text>
        <dbReference type="Rhea" id="RHEA:44640"/>
        <dbReference type="ChEBI" id="CHEBI:30616"/>
        <dbReference type="ChEBI" id="CHEBI:61560"/>
        <dbReference type="ChEBI" id="CHEBI:73316"/>
        <dbReference type="ChEBI" id="CHEBI:456216"/>
        <dbReference type="EC" id="2.7.4.6"/>
    </reaction>
</comment>
<comment type="catalytic activity">
    <reaction evidence="1">
        <text>a ribonucleoside 5'-diphosphate + ATP = a ribonucleoside 5'-triphosphate + ADP</text>
        <dbReference type="Rhea" id="RHEA:18113"/>
        <dbReference type="ChEBI" id="CHEBI:30616"/>
        <dbReference type="ChEBI" id="CHEBI:57930"/>
        <dbReference type="ChEBI" id="CHEBI:61557"/>
        <dbReference type="ChEBI" id="CHEBI:456216"/>
        <dbReference type="EC" id="2.7.4.6"/>
    </reaction>
</comment>
<comment type="catalytic activity">
    <reaction evidence="1">
        <text>GDP + ATP = GTP + ADP</text>
        <dbReference type="Rhea" id="RHEA:27686"/>
        <dbReference type="ChEBI" id="CHEBI:30616"/>
        <dbReference type="ChEBI" id="CHEBI:37565"/>
        <dbReference type="ChEBI" id="CHEBI:58189"/>
        <dbReference type="ChEBI" id="CHEBI:456216"/>
        <dbReference type="EC" id="2.7.4.6"/>
    </reaction>
</comment>
<comment type="catalytic activity">
    <reaction evidence="1">
        <text>CDP + GTP = CTP + GDP</text>
        <dbReference type="Rhea" id="RHEA:79859"/>
        <dbReference type="ChEBI" id="CHEBI:37563"/>
        <dbReference type="ChEBI" id="CHEBI:37565"/>
        <dbReference type="ChEBI" id="CHEBI:58069"/>
        <dbReference type="ChEBI" id="CHEBI:58189"/>
    </reaction>
</comment>
<comment type="catalytic activity">
    <reaction evidence="1">
        <text>CDP + ATP = CTP + ADP</text>
        <dbReference type="Rhea" id="RHEA:25237"/>
        <dbReference type="ChEBI" id="CHEBI:30616"/>
        <dbReference type="ChEBI" id="CHEBI:37563"/>
        <dbReference type="ChEBI" id="CHEBI:58069"/>
        <dbReference type="ChEBI" id="CHEBI:456216"/>
        <dbReference type="EC" id="2.7.4.6"/>
    </reaction>
</comment>
<comment type="catalytic activity">
    <reaction evidence="1">
        <text>UDP + ATP = UTP + ADP</text>
        <dbReference type="Rhea" id="RHEA:25098"/>
        <dbReference type="ChEBI" id="CHEBI:30616"/>
        <dbReference type="ChEBI" id="CHEBI:46398"/>
        <dbReference type="ChEBI" id="CHEBI:58223"/>
        <dbReference type="ChEBI" id="CHEBI:456216"/>
        <dbReference type="EC" id="2.7.4.6"/>
    </reaction>
</comment>
<comment type="catalytic activity">
    <reaction evidence="1">
        <text>GTP + UDP = UTP + GDP</text>
        <dbReference type="Rhea" id="RHEA:79863"/>
        <dbReference type="ChEBI" id="CHEBI:37565"/>
        <dbReference type="ChEBI" id="CHEBI:46398"/>
        <dbReference type="ChEBI" id="CHEBI:58189"/>
        <dbReference type="ChEBI" id="CHEBI:58223"/>
    </reaction>
</comment>
<comment type="catalytic activity">
    <reaction evidence="1">
        <text>dADP + GTP = dATP + GDP</text>
        <dbReference type="Rhea" id="RHEA:79871"/>
        <dbReference type="ChEBI" id="CHEBI:37565"/>
        <dbReference type="ChEBI" id="CHEBI:57667"/>
        <dbReference type="ChEBI" id="CHEBI:58189"/>
        <dbReference type="ChEBI" id="CHEBI:61404"/>
    </reaction>
</comment>
<comment type="catalytic activity">
    <reaction evidence="1">
        <text>dCDP + GTP = dCTP + GDP</text>
        <dbReference type="Rhea" id="RHEA:79875"/>
        <dbReference type="ChEBI" id="CHEBI:37565"/>
        <dbReference type="ChEBI" id="CHEBI:58189"/>
        <dbReference type="ChEBI" id="CHEBI:58593"/>
        <dbReference type="ChEBI" id="CHEBI:61481"/>
    </reaction>
</comment>
<comment type="catalytic activity">
    <reaction evidence="1">
        <text>dCDP + ATP = dCTP + ADP</text>
        <dbReference type="Rhea" id="RHEA:27678"/>
        <dbReference type="ChEBI" id="CHEBI:30616"/>
        <dbReference type="ChEBI" id="CHEBI:58593"/>
        <dbReference type="ChEBI" id="CHEBI:61481"/>
        <dbReference type="ChEBI" id="CHEBI:456216"/>
        <dbReference type="EC" id="2.7.4.6"/>
    </reaction>
</comment>
<comment type="catalytic activity">
    <reaction evidence="1">
        <text>dGDP + ATP = dGTP + ADP</text>
        <dbReference type="Rhea" id="RHEA:27690"/>
        <dbReference type="ChEBI" id="CHEBI:30616"/>
        <dbReference type="ChEBI" id="CHEBI:58595"/>
        <dbReference type="ChEBI" id="CHEBI:61429"/>
        <dbReference type="ChEBI" id="CHEBI:456216"/>
        <dbReference type="EC" id="2.7.4.6"/>
    </reaction>
</comment>
<comment type="catalytic activity">
    <reaction evidence="1">
        <text>dTDP + GTP = dTTP + GDP</text>
        <dbReference type="Rhea" id="RHEA:79867"/>
        <dbReference type="ChEBI" id="CHEBI:37565"/>
        <dbReference type="ChEBI" id="CHEBI:37568"/>
        <dbReference type="ChEBI" id="CHEBI:58189"/>
        <dbReference type="ChEBI" id="CHEBI:58369"/>
    </reaction>
</comment>
<comment type="catalytic activity">
    <reaction evidence="1">
        <text>dTDP + ATP = dTTP + ADP</text>
        <dbReference type="Rhea" id="RHEA:27682"/>
        <dbReference type="ChEBI" id="CHEBI:30616"/>
        <dbReference type="ChEBI" id="CHEBI:37568"/>
        <dbReference type="ChEBI" id="CHEBI:58369"/>
        <dbReference type="ChEBI" id="CHEBI:456216"/>
        <dbReference type="EC" id="2.7.4.6"/>
    </reaction>
</comment>
<comment type="subunit">
    <text evidence="1">Monomer. Interacts with SLC25A5/ANT2.</text>
</comment>
<comment type="subcellular location">
    <subcellularLocation>
        <location evidence="1 3">Mitochondrion matrix</location>
    </subcellularLocation>
</comment>
<comment type="tissue specificity">
    <text evidence="4">Expressed in the pyramidal cells in the hippocampus.</text>
</comment>
<comment type="developmental stage">
    <text evidence="4">Expressed in the central nervous system in a region-specific manner from the middle stage of embryogenesis to the adulthood in the rodent.</text>
</comment>
<comment type="domain">
    <text evidence="3">Consists of three domains, a large central CORE domain and two small peripheral domains, NMPbind and LID, which undergo movements during catalysis. The LID domain closes over the site of phosphoryl transfer upon GTP/ATP binding. Assembling and dissambling the active center during each catalytic cycle provides an effective means to prevent GTP/ATP hydrolysis.</text>
</comment>
<comment type="similarity">
    <text evidence="3">Belongs to the adenylate kinase family. AK3 subfamily.</text>
</comment>
<reference key="1">
    <citation type="journal article" date="1998" name="Brain Res. Mol. Brain Res.">
        <title>Identification of a novel adenylate kinase system in the brain: cloning of the fourth adenylate kinase.</title>
        <authorList>
            <person name="Yoneda T."/>
            <person name="Sato M."/>
            <person name="Maeda M."/>
            <person name="Takagi H."/>
        </authorList>
    </citation>
    <scope>NUCLEOTIDE SEQUENCE [MRNA]</scope>
    <scope>TISSUE SPECIFICITY</scope>
    <scope>DEVELOPMENTAL STAGE</scope>
    <source>
        <strain>Wistar</strain>
        <tissue>Forebrain</tissue>
    </source>
</reference>
<reference key="2">
    <citation type="journal article" date="2004" name="Genome Res.">
        <title>The status, quality, and expansion of the NIH full-length cDNA project: the Mammalian Gene Collection (MGC).</title>
        <authorList>
            <consortium name="The MGC Project Team"/>
        </authorList>
    </citation>
    <scope>NUCLEOTIDE SEQUENCE [LARGE SCALE MRNA]</scope>
    <source>
        <tissue>Kidney</tissue>
    </source>
</reference>
<feature type="chain" id="PRO_0000158929" description="Adenylate kinase 4, mitochondrial">
    <location>
        <begin position="1"/>
        <end position="223"/>
    </location>
</feature>
<feature type="region of interest" description="NMP" evidence="3">
    <location>
        <begin position="35"/>
        <end position="64"/>
    </location>
</feature>
<feature type="region of interest" description="LID" evidence="3">
    <location>
        <begin position="125"/>
        <end position="162"/>
    </location>
</feature>
<feature type="binding site" evidence="3">
    <location>
        <begin position="15"/>
        <end position="20"/>
    </location>
    <ligand>
        <name>a ribonucleoside 5'-triphosphate</name>
        <dbReference type="ChEBI" id="CHEBI:61557"/>
    </ligand>
</feature>
<feature type="binding site" evidence="3">
    <location>
        <position position="36"/>
    </location>
    <ligand>
        <name>AMP</name>
        <dbReference type="ChEBI" id="CHEBI:456215"/>
    </ligand>
</feature>
<feature type="binding site" evidence="3">
    <location>
        <position position="41"/>
    </location>
    <ligand>
        <name>AMP</name>
        <dbReference type="ChEBI" id="CHEBI:456215"/>
    </ligand>
</feature>
<feature type="binding site" evidence="3">
    <location>
        <begin position="62"/>
        <end position="64"/>
    </location>
    <ligand>
        <name>AMP</name>
        <dbReference type="ChEBI" id="CHEBI:456215"/>
    </ligand>
</feature>
<feature type="binding site" evidence="3">
    <location>
        <begin position="89"/>
        <end position="92"/>
    </location>
    <ligand>
        <name>AMP</name>
        <dbReference type="ChEBI" id="CHEBI:456215"/>
    </ligand>
</feature>
<feature type="binding site" evidence="3">
    <location>
        <position position="96"/>
    </location>
    <ligand>
        <name>AMP</name>
        <dbReference type="ChEBI" id="CHEBI:456215"/>
    </ligand>
</feature>
<feature type="binding site" evidence="3">
    <location>
        <position position="126"/>
    </location>
    <ligand>
        <name>a ribonucleoside 5'-triphosphate</name>
        <dbReference type="ChEBI" id="CHEBI:61557"/>
    </ligand>
</feature>
<feature type="binding site" evidence="3">
    <location>
        <begin position="135"/>
        <end position="136"/>
    </location>
    <ligand>
        <name>a ribonucleoside 5'-triphosphate</name>
        <dbReference type="ChEBI" id="CHEBI:61557"/>
    </ligand>
</feature>
<feature type="binding site" evidence="3">
    <location>
        <position position="170"/>
    </location>
    <ligand>
        <name>AMP</name>
        <dbReference type="ChEBI" id="CHEBI:456215"/>
    </ligand>
</feature>
<feature type="binding site" evidence="3">
    <location>
        <position position="199"/>
    </location>
    <ligand>
        <name>a ribonucleoside 5'-triphosphate</name>
        <dbReference type="ChEBI" id="CHEBI:61557"/>
    </ligand>
</feature>
<feature type="modified residue" description="N6-succinyllysine" evidence="2">
    <location>
        <position position="60"/>
    </location>
</feature>
<feature type="modified residue" description="N6-acetyllysine" evidence="2">
    <location>
        <position position="175"/>
    </location>
</feature>
<feature type="modified residue" description="N6-acetyllysine; alternate" evidence="2">
    <location>
        <position position="179"/>
    </location>
</feature>
<feature type="modified residue" description="N6-succinyllysine; alternate" evidence="2">
    <location>
        <position position="179"/>
    </location>
</feature>
<feature type="modified residue" description="N6-acetyllysine; alternate" evidence="2">
    <location>
        <position position="186"/>
    </location>
</feature>
<feature type="modified residue" description="N6-succinyllysine; alternate" evidence="2">
    <location>
        <position position="186"/>
    </location>
</feature>
<dbReference type="EC" id="2.7.4.4" evidence="1"/>
<dbReference type="EC" id="2.7.4.6" evidence="1"/>
<dbReference type="EMBL" id="D87809">
    <property type="protein sequence ID" value="BAA77761.1"/>
    <property type="molecule type" value="mRNA"/>
</dbReference>
<dbReference type="EMBL" id="BC087024">
    <property type="protein sequence ID" value="AAH87024.1"/>
    <property type="molecule type" value="mRNA"/>
</dbReference>
<dbReference type="RefSeq" id="NP_001416474.1">
    <property type="nucleotide sequence ID" value="NM_001429545.1"/>
</dbReference>
<dbReference type="RefSeq" id="NP_001416475.1">
    <property type="nucleotide sequence ID" value="NM_001429546.1"/>
</dbReference>
<dbReference type="RefSeq" id="NP_058831.1">
    <property type="nucleotide sequence ID" value="NM_017135.4"/>
</dbReference>
<dbReference type="RefSeq" id="XP_017448685.1">
    <property type="nucleotide sequence ID" value="XM_017593196.1"/>
</dbReference>
<dbReference type="SMR" id="Q9WUS0"/>
<dbReference type="FunCoup" id="Q9WUS0">
    <property type="interactions" value="1006"/>
</dbReference>
<dbReference type="STRING" id="10116.ENSRNOP00000065349"/>
<dbReference type="iPTMnet" id="Q9WUS0"/>
<dbReference type="PhosphoSitePlus" id="Q9WUS0"/>
<dbReference type="jPOST" id="Q9WUS0"/>
<dbReference type="PaxDb" id="10116-ENSRNOP00000065349"/>
<dbReference type="GeneID" id="29223"/>
<dbReference type="KEGG" id="rno:29223"/>
<dbReference type="UCSC" id="RGD:2078">
    <property type="organism name" value="rat"/>
</dbReference>
<dbReference type="AGR" id="RGD:2078"/>
<dbReference type="CTD" id="205"/>
<dbReference type="RGD" id="2078">
    <property type="gene designation" value="Ak4"/>
</dbReference>
<dbReference type="VEuPathDB" id="HostDB:ENSRNOG00000045738"/>
<dbReference type="eggNOG" id="KOG3078">
    <property type="taxonomic scope" value="Eukaryota"/>
</dbReference>
<dbReference type="HOGENOM" id="CLU_032354_1_1_1"/>
<dbReference type="InParanoid" id="Q9WUS0"/>
<dbReference type="OrthoDB" id="34407at9989"/>
<dbReference type="PhylomeDB" id="Q9WUS0"/>
<dbReference type="Reactome" id="R-RNO-499943">
    <property type="pathway name" value="Interconversion of nucleotide di- and triphosphates"/>
</dbReference>
<dbReference type="PRO" id="PR:Q9WUS0"/>
<dbReference type="Proteomes" id="UP000002494">
    <property type="component" value="Chromosome 5"/>
</dbReference>
<dbReference type="Bgee" id="ENSRNOG00000045738">
    <property type="expression patterns" value="Expressed in adult mammalian kidney and 17 other cell types or tissues"/>
</dbReference>
<dbReference type="GO" id="GO:0005737">
    <property type="term" value="C:cytoplasm"/>
    <property type="evidence" value="ECO:0000318"/>
    <property type="project" value="GO_Central"/>
</dbReference>
<dbReference type="GO" id="GO:0005759">
    <property type="term" value="C:mitochondrial matrix"/>
    <property type="evidence" value="ECO:0000266"/>
    <property type="project" value="RGD"/>
</dbReference>
<dbReference type="GO" id="GO:0005739">
    <property type="term" value="C:mitochondrion"/>
    <property type="evidence" value="ECO:0000266"/>
    <property type="project" value="RGD"/>
</dbReference>
<dbReference type="GO" id="GO:0004017">
    <property type="term" value="F:adenylate kinase activity"/>
    <property type="evidence" value="ECO:0000266"/>
    <property type="project" value="RGD"/>
</dbReference>
<dbReference type="GO" id="GO:0005524">
    <property type="term" value="F:ATP binding"/>
    <property type="evidence" value="ECO:0007669"/>
    <property type="project" value="UniProtKB-KW"/>
</dbReference>
<dbReference type="GO" id="GO:0036430">
    <property type="term" value="F:CMP kinase activity"/>
    <property type="evidence" value="ECO:0007669"/>
    <property type="project" value="RHEA"/>
</dbReference>
<dbReference type="GO" id="GO:0036431">
    <property type="term" value="F:dCMP kinase activity"/>
    <property type="evidence" value="ECO:0007669"/>
    <property type="project" value="RHEA"/>
</dbReference>
<dbReference type="GO" id="GO:0047506">
    <property type="term" value="F:deoxyadenylate kinase activity"/>
    <property type="evidence" value="ECO:0007669"/>
    <property type="project" value="RHEA"/>
</dbReference>
<dbReference type="GO" id="GO:0005525">
    <property type="term" value="F:GTP binding"/>
    <property type="evidence" value="ECO:0007669"/>
    <property type="project" value="UniProtKB-KW"/>
</dbReference>
<dbReference type="GO" id="GO:0004550">
    <property type="term" value="F:nucleoside diphosphate kinase activity"/>
    <property type="evidence" value="ECO:0000250"/>
    <property type="project" value="UniProtKB"/>
</dbReference>
<dbReference type="GO" id="GO:0046899">
    <property type="term" value="F:nucleoside triphosphate adenylate kinase activity"/>
    <property type="evidence" value="ECO:0000266"/>
    <property type="project" value="RGD"/>
</dbReference>
<dbReference type="GO" id="GO:0006172">
    <property type="term" value="P:ADP biosynthetic process"/>
    <property type="evidence" value="ECO:0007669"/>
    <property type="project" value="UniProtKB-UniRule"/>
</dbReference>
<dbReference type="GO" id="GO:0046033">
    <property type="term" value="P:AMP metabolic process"/>
    <property type="evidence" value="ECO:0000266"/>
    <property type="project" value="RGD"/>
</dbReference>
<dbReference type="GO" id="GO:0046034">
    <property type="term" value="P:ATP metabolic process"/>
    <property type="evidence" value="ECO:0000266"/>
    <property type="project" value="RGD"/>
</dbReference>
<dbReference type="GO" id="GO:0071456">
    <property type="term" value="P:cellular response to hypoxia"/>
    <property type="evidence" value="ECO:0000250"/>
    <property type="project" value="UniProtKB"/>
</dbReference>
<dbReference type="GO" id="GO:0046039">
    <property type="term" value="P:GTP metabolic process"/>
    <property type="evidence" value="ECO:0000266"/>
    <property type="project" value="RGD"/>
</dbReference>
<dbReference type="GO" id="GO:0001889">
    <property type="term" value="P:liver development"/>
    <property type="evidence" value="ECO:0000270"/>
    <property type="project" value="RGD"/>
</dbReference>
<dbReference type="GO" id="GO:0009142">
    <property type="term" value="P:nucleoside triphosphate biosynthetic process"/>
    <property type="evidence" value="ECO:0000318"/>
    <property type="project" value="GO_Central"/>
</dbReference>
<dbReference type="GO" id="GO:0002082">
    <property type="term" value="P:regulation of oxidative phosphorylation"/>
    <property type="evidence" value="ECO:0000250"/>
    <property type="project" value="UniProtKB"/>
</dbReference>
<dbReference type="GO" id="GO:0009410">
    <property type="term" value="P:response to xenobiotic stimulus"/>
    <property type="evidence" value="ECO:0000270"/>
    <property type="project" value="RGD"/>
</dbReference>
<dbReference type="GO" id="GO:0009188">
    <property type="term" value="P:ribonucleoside diphosphate biosynthetic process"/>
    <property type="evidence" value="ECO:0000250"/>
    <property type="project" value="UniProtKB"/>
</dbReference>
<dbReference type="CDD" id="cd01428">
    <property type="entry name" value="ADK"/>
    <property type="match status" value="1"/>
</dbReference>
<dbReference type="FunFam" id="3.40.50.300:FF:000106">
    <property type="entry name" value="Adenylate kinase mitochondrial"/>
    <property type="match status" value="1"/>
</dbReference>
<dbReference type="Gene3D" id="3.40.50.300">
    <property type="entry name" value="P-loop containing nucleotide triphosphate hydrolases"/>
    <property type="match status" value="1"/>
</dbReference>
<dbReference type="HAMAP" id="MF_00235">
    <property type="entry name" value="Adenylate_kinase_Adk"/>
    <property type="match status" value="1"/>
</dbReference>
<dbReference type="HAMAP" id="MF_03169">
    <property type="entry name" value="Adenylate_kinase_AK3"/>
    <property type="match status" value="1"/>
</dbReference>
<dbReference type="HAMAP" id="MF_03170">
    <property type="entry name" value="Adenylate_kinase_AK4"/>
    <property type="match status" value="1"/>
</dbReference>
<dbReference type="InterPro" id="IPR006259">
    <property type="entry name" value="Adenyl_kin_sub"/>
</dbReference>
<dbReference type="InterPro" id="IPR000850">
    <property type="entry name" value="Adenylat/UMP-CMP_kin"/>
</dbReference>
<dbReference type="InterPro" id="IPR033690">
    <property type="entry name" value="Adenylat_kinase_CS"/>
</dbReference>
<dbReference type="InterPro" id="IPR007862">
    <property type="entry name" value="Adenylate_kinase_lid-dom"/>
</dbReference>
<dbReference type="InterPro" id="IPR028586">
    <property type="entry name" value="AK3/Ak4_mitochondrial"/>
</dbReference>
<dbReference type="InterPro" id="IPR028585">
    <property type="entry name" value="AK4_mitochondrial"/>
</dbReference>
<dbReference type="InterPro" id="IPR027417">
    <property type="entry name" value="P-loop_NTPase"/>
</dbReference>
<dbReference type="NCBIfam" id="TIGR01351">
    <property type="entry name" value="adk"/>
    <property type="match status" value="1"/>
</dbReference>
<dbReference type="PANTHER" id="PTHR23359">
    <property type="entry name" value="NUCLEOTIDE KINASE"/>
    <property type="match status" value="1"/>
</dbReference>
<dbReference type="Pfam" id="PF00406">
    <property type="entry name" value="ADK"/>
    <property type="match status" value="1"/>
</dbReference>
<dbReference type="Pfam" id="PF05191">
    <property type="entry name" value="ADK_lid"/>
    <property type="match status" value="1"/>
</dbReference>
<dbReference type="PRINTS" id="PR00094">
    <property type="entry name" value="ADENYLTKNASE"/>
</dbReference>
<dbReference type="SUPFAM" id="SSF52540">
    <property type="entry name" value="P-loop containing nucleoside triphosphate hydrolases"/>
    <property type="match status" value="1"/>
</dbReference>
<dbReference type="PROSITE" id="PS00113">
    <property type="entry name" value="ADENYLATE_KINASE"/>
    <property type="match status" value="1"/>
</dbReference>
<organism>
    <name type="scientific">Rattus norvegicus</name>
    <name type="common">Rat</name>
    <dbReference type="NCBI Taxonomy" id="10116"/>
    <lineage>
        <taxon>Eukaryota</taxon>
        <taxon>Metazoa</taxon>
        <taxon>Chordata</taxon>
        <taxon>Craniata</taxon>
        <taxon>Vertebrata</taxon>
        <taxon>Euteleostomi</taxon>
        <taxon>Mammalia</taxon>
        <taxon>Eutheria</taxon>
        <taxon>Euarchontoglires</taxon>
        <taxon>Glires</taxon>
        <taxon>Rodentia</taxon>
        <taxon>Myomorpha</taxon>
        <taxon>Muroidea</taxon>
        <taxon>Muridae</taxon>
        <taxon>Murinae</taxon>
        <taxon>Rattus</taxon>
    </lineage>
</organism>
<protein>
    <recommendedName>
        <fullName evidence="1">Adenylate kinase 4, mitochondrial</fullName>
        <ecNumber evidence="1">2.7.4.4</ecNumber>
        <ecNumber evidence="1">2.7.4.6</ecNumber>
    </recommendedName>
    <alternativeName>
        <fullName evidence="3">Adenylate kinase 3-like</fullName>
    </alternativeName>
    <alternativeName>
        <fullName evidence="3">GTP:AMP phosphotransferase AK4</fullName>
    </alternativeName>
</protein>
<evidence type="ECO:0000250" key="1">
    <source>
        <dbReference type="UniProtKB" id="P27144"/>
    </source>
</evidence>
<evidence type="ECO:0000250" key="2">
    <source>
        <dbReference type="UniProtKB" id="Q9WUR9"/>
    </source>
</evidence>
<evidence type="ECO:0000255" key="3">
    <source>
        <dbReference type="HAMAP-Rule" id="MF_03170"/>
    </source>
</evidence>
<evidence type="ECO:0000269" key="4">
    <source>
    </source>
</evidence>
<evidence type="ECO:0000312" key="5">
    <source>
        <dbReference type="RGD" id="2078"/>
    </source>
</evidence>
<accession>Q9WUS0</accession>
<gene>
    <name evidence="5" type="primary">Ak4</name>
</gene>
<name>KAD4_RAT</name>